<evidence type="ECO:0000255" key="1">
    <source>
        <dbReference type="HAMAP-Rule" id="MF_00318"/>
    </source>
</evidence>
<comment type="function">
    <text evidence="1">Catalyzes the reversible conversion of 2-phosphoglycerate (2-PG) into phosphoenolpyruvate (PEP). It is essential for the degradation of carbohydrates via glycolysis.</text>
</comment>
<comment type="catalytic activity">
    <reaction evidence="1">
        <text>(2R)-2-phosphoglycerate = phosphoenolpyruvate + H2O</text>
        <dbReference type="Rhea" id="RHEA:10164"/>
        <dbReference type="ChEBI" id="CHEBI:15377"/>
        <dbReference type="ChEBI" id="CHEBI:58289"/>
        <dbReference type="ChEBI" id="CHEBI:58702"/>
        <dbReference type="EC" id="4.2.1.11"/>
    </reaction>
</comment>
<comment type="cofactor">
    <cofactor evidence="1">
        <name>Mg(2+)</name>
        <dbReference type="ChEBI" id="CHEBI:18420"/>
    </cofactor>
    <text evidence="1">Binds a second Mg(2+) ion via substrate during catalysis.</text>
</comment>
<comment type="pathway">
    <text evidence="1">Carbohydrate degradation; glycolysis; pyruvate from D-glyceraldehyde 3-phosphate: step 4/5.</text>
</comment>
<comment type="subcellular location">
    <subcellularLocation>
        <location evidence="1">Cytoplasm</location>
    </subcellularLocation>
    <subcellularLocation>
        <location evidence="1">Secreted</location>
    </subcellularLocation>
    <subcellularLocation>
        <location evidence="1">Cell surface</location>
    </subcellularLocation>
    <text evidence="1">Fractions of enolase are present in both the cytoplasm and on the cell surface.</text>
</comment>
<comment type="similarity">
    <text evidence="1">Belongs to the enolase family.</text>
</comment>
<organism>
    <name type="scientific">Pyrobaculum aerophilum (strain ATCC 51768 / DSM 7523 / JCM 9630 / CIP 104966 / NBRC 100827 / IM2)</name>
    <dbReference type="NCBI Taxonomy" id="178306"/>
    <lineage>
        <taxon>Archaea</taxon>
        <taxon>Thermoproteota</taxon>
        <taxon>Thermoprotei</taxon>
        <taxon>Thermoproteales</taxon>
        <taxon>Thermoproteaceae</taxon>
        <taxon>Pyrobaculum</taxon>
    </lineage>
</organism>
<gene>
    <name evidence="1" type="primary">eno</name>
    <name type="ordered locus">PAE0812</name>
</gene>
<reference key="1">
    <citation type="journal article" date="2002" name="Proc. Natl. Acad. Sci. U.S.A.">
        <title>Genome sequence of the hyperthermophilic crenarchaeon Pyrobaculum aerophilum.</title>
        <authorList>
            <person name="Fitz-Gibbon S.T."/>
            <person name="Ladner H."/>
            <person name="Kim U.-J."/>
            <person name="Stetter K.O."/>
            <person name="Simon M.I."/>
            <person name="Miller J.H."/>
        </authorList>
    </citation>
    <scope>NUCLEOTIDE SEQUENCE [LARGE SCALE GENOMIC DNA]</scope>
    <source>
        <strain>ATCC 51768 / DSM 7523 / JCM 9630 / CIP 104966 / NBRC 100827 / IM2</strain>
    </source>
</reference>
<keyword id="KW-0963">Cytoplasm</keyword>
<keyword id="KW-0324">Glycolysis</keyword>
<keyword id="KW-0456">Lyase</keyword>
<keyword id="KW-0460">Magnesium</keyword>
<keyword id="KW-0479">Metal-binding</keyword>
<keyword id="KW-1185">Reference proteome</keyword>
<keyword id="KW-0964">Secreted</keyword>
<proteinExistence type="inferred from homology"/>
<dbReference type="EC" id="4.2.1.11" evidence="1"/>
<dbReference type="EMBL" id="AE009441">
    <property type="protein sequence ID" value="AAL63046.1"/>
    <property type="molecule type" value="Genomic_DNA"/>
</dbReference>
<dbReference type="RefSeq" id="WP_011007518.1">
    <property type="nucleotide sequence ID" value="NC_003364.1"/>
</dbReference>
<dbReference type="SMR" id="Q8ZYE7"/>
<dbReference type="FunCoup" id="Q8ZYE7">
    <property type="interactions" value="176"/>
</dbReference>
<dbReference type="STRING" id="178306.PAE0812"/>
<dbReference type="EnsemblBacteria" id="AAL63046">
    <property type="protein sequence ID" value="AAL63046"/>
    <property type="gene ID" value="PAE0812"/>
</dbReference>
<dbReference type="GeneID" id="1465275"/>
<dbReference type="KEGG" id="pai:PAE0812"/>
<dbReference type="PATRIC" id="fig|178306.9.peg.595"/>
<dbReference type="eggNOG" id="arCOG01169">
    <property type="taxonomic scope" value="Archaea"/>
</dbReference>
<dbReference type="HOGENOM" id="CLU_031223_0_1_2"/>
<dbReference type="InParanoid" id="Q8ZYE7"/>
<dbReference type="UniPathway" id="UPA00109">
    <property type="reaction ID" value="UER00187"/>
</dbReference>
<dbReference type="Proteomes" id="UP000002439">
    <property type="component" value="Chromosome"/>
</dbReference>
<dbReference type="GO" id="GO:0009986">
    <property type="term" value="C:cell surface"/>
    <property type="evidence" value="ECO:0007669"/>
    <property type="project" value="UniProtKB-SubCell"/>
</dbReference>
<dbReference type="GO" id="GO:0005576">
    <property type="term" value="C:extracellular region"/>
    <property type="evidence" value="ECO:0007669"/>
    <property type="project" value="UniProtKB-SubCell"/>
</dbReference>
<dbReference type="GO" id="GO:0000015">
    <property type="term" value="C:phosphopyruvate hydratase complex"/>
    <property type="evidence" value="ECO:0000318"/>
    <property type="project" value="GO_Central"/>
</dbReference>
<dbReference type="GO" id="GO:0000287">
    <property type="term" value="F:magnesium ion binding"/>
    <property type="evidence" value="ECO:0007669"/>
    <property type="project" value="UniProtKB-UniRule"/>
</dbReference>
<dbReference type="GO" id="GO:0004634">
    <property type="term" value="F:phosphopyruvate hydratase activity"/>
    <property type="evidence" value="ECO:0000318"/>
    <property type="project" value="GO_Central"/>
</dbReference>
<dbReference type="GO" id="GO:0006096">
    <property type="term" value="P:glycolytic process"/>
    <property type="evidence" value="ECO:0000318"/>
    <property type="project" value="GO_Central"/>
</dbReference>
<dbReference type="CDD" id="cd03313">
    <property type="entry name" value="enolase"/>
    <property type="match status" value="1"/>
</dbReference>
<dbReference type="Gene3D" id="3.20.20.120">
    <property type="entry name" value="Enolase-like C-terminal domain"/>
    <property type="match status" value="1"/>
</dbReference>
<dbReference type="Gene3D" id="3.30.390.10">
    <property type="entry name" value="Enolase-like, N-terminal domain"/>
    <property type="match status" value="1"/>
</dbReference>
<dbReference type="HAMAP" id="MF_00318">
    <property type="entry name" value="Enolase"/>
    <property type="match status" value="1"/>
</dbReference>
<dbReference type="InterPro" id="IPR000941">
    <property type="entry name" value="Enolase"/>
</dbReference>
<dbReference type="InterPro" id="IPR036849">
    <property type="entry name" value="Enolase-like_C_sf"/>
</dbReference>
<dbReference type="InterPro" id="IPR029017">
    <property type="entry name" value="Enolase-like_N"/>
</dbReference>
<dbReference type="InterPro" id="IPR020810">
    <property type="entry name" value="Enolase_C"/>
</dbReference>
<dbReference type="InterPro" id="IPR020809">
    <property type="entry name" value="Enolase_CS"/>
</dbReference>
<dbReference type="InterPro" id="IPR020811">
    <property type="entry name" value="Enolase_N"/>
</dbReference>
<dbReference type="PANTHER" id="PTHR11902">
    <property type="entry name" value="ENOLASE"/>
    <property type="match status" value="1"/>
</dbReference>
<dbReference type="PANTHER" id="PTHR11902:SF1">
    <property type="entry name" value="ENOLASE"/>
    <property type="match status" value="1"/>
</dbReference>
<dbReference type="Pfam" id="PF00113">
    <property type="entry name" value="Enolase_C"/>
    <property type="match status" value="1"/>
</dbReference>
<dbReference type="Pfam" id="PF03952">
    <property type="entry name" value="Enolase_N"/>
    <property type="match status" value="1"/>
</dbReference>
<dbReference type="PIRSF" id="PIRSF001400">
    <property type="entry name" value="Enolase"/>
    <property type="match status" value="1"/>
</dbReference>
<dbReference type="PRINTS" id="PR00148">
    <property type="entry name" value="ENOLASE"/>
</dbReference>
<dbReference type="SFLD" id="SFLDF00002">
    <property type="entry name" value="enolase"/>
    <property type="match status" value="1"/>
</dbReference>
<dbReference type="SFLD" id="SFLDG00178">
    <property type="entry name" value="enolase"/>
    <property type="match status" value="1"/>
</dbReference>
<dbReference type="SMART" id="SM01192">
    <property type="entry name" value="Enolase_C"/>
    <property type="match status" value="1"/>
</dbReference>
<dbReference type="SMART" id="SM01193">
    <property type="entry name" value="Enolase_N"/>
    <property type="match status" value="1"/>
</dbReference>
<dbReference type="SUPFAM" id="SSF51604">
    <property type="entry name" value="Enolase C-terminal domain-like"/>
    <property type="match status" value="1"/>
</dbReference>
<dbReference type="SUPFAM" id="SSF54826">
    <property type="entry name" value="Enolase N-terminal domain-like"/>
    <property type="match status" value="1"/>
</dbReference>
<dbReference type="PROSITE" id="PS00164">
    <property type="entry name" value="ENOLASE"/>
    <property type="match status" value="1"/>
</dbReference>
<name>ENO_PYRAE</name>
<accession>Q8ZYE7</accession>
<protein>
    <recommendedName>
        <fullName evidence="1">Enolase</fullName>
        <ecNumber evidence="1">4.2.1.11</ecNumber>
    </recommendedName>
    <alternativeName>
        <fullName evidence="1">2-phospho-D-glycerate hydro-lyase</fullName>
    </alternativeName>
    <alternativeName>
        <fullName evidence="1">2-phosphoglycerate dehydratase</fullName>
    </alternativeName>
</protein>
<sequence length="419" mass="45378">MQISDAWIRKVFTGRGDVTVEVELTVEDSVTGDVLVTRAAAPAGASRGAHEVLYFPEGGVDAALAAFEKLVAPEIVGLDVTEPYSTDGKLEEVDGTQRFEKIGGAVAIATSFAAAEAGAASLGVPLYSFIGGAYARRLPLPLGNVIGGGKHSRGLGPDIQEFLAMPLNPPDIYTAVYTNVEIHKRVLKYILKVDTSFTGGKNDEGAWTPRISSTTALKILREAAREVSGELGVEVGIGVDVAASSLWNGEKYVYKNEGVERDPREQFEFIAKLIEEYDLVYVEDPFHEEDFQSFAELRDRFKDRLIVGDDLFVTNPERIKKGGKIGAATGVIIKPDQIGTLLRAHQAVSAAREFGMRVIVSHRSGDTEYKTLAHIAVGFGAEVIKTGIMGGERTAKLNELIRIGDYLGKWATITQIRIH</sequence>
<feature type="chain" id="PRO_0000134030" description="Enolase">
    <location>
        <begin position="1"/>
        <end position="419"/>
    </location>
</feature>
<feature type="active site" description="Proton donor" evidence="1">
    <location>
        <position position="204"/>
    </location>
</feature>
<feature type="active site" description="Proton acceptor" evidence="1">
    <location>
        <position position="334"/>
    </location>
</feature>
<feature type="binding site" evidence="1">
    <location>
        <position position="160"/>
    </location>
    <ligand>
        <name>(2R)-2-phosphoglycerate</name>
        <dbReference type="ChEBI" id="CHEBI:58289"/>
    </ligand>
</feature>
<feature type="binding site" evidence="1">
    <location>
        <position position="240"/>
    </location>
    <ligand>
        <name>Mg(2+)</name>
        <dbReference type="ChEBI" id="CHEBI:18420"/>
    </ligand>
</feature>
<feature type="binding site" evidence="1">
    <location>
        <position position="283"/>
    </location>
    <ligand>
        <name>Mg(2+)</name>
        <dbReference type="ChEBI" id="CHEBI:18420"/>
    </ligand>
</feature>
<feature type="binding site" evidence="1">
    <location>
        <position position="309"/>
    </location>
    <ligand>
        <name>Mg(2+)</name>
        <dbReference type="ChEBI" id="CHEBI:18420"/>
    </ligand>
</feature>
<feature type="binding site" evidence="1">
    <location>
        <position position="334"/>
    </location>
    <ligand>
        <name>(2R)-2-phosphoglycerate</name>
        <dbReference type="ChEBI" id="CHEBI:58289"/>
    </ligand>
</feature>
<feature type="binding site" evidence="1">
    <location>
        <position position="363"/>
    </location>
    <ligand>
        <name>(2R)-2-phosphoglycerate</name>
        <dbReference type="ChEBI" id="CHEBI:58289"/>
    </ligand>
</feature>
<feature type="binding site" evidence="1">
    <location>
        <position position="364"/>
    </location>
    <ligand>
        <name>(2R)-2-phosphoglycerate</name>
        <dbReference type="ChEBI" id="CHEBI:58289"/>
    </ligand>
</feature>
<feature type="binding site" evidence="1">
    <location>
        <position position="385"/>
    </location>
    <ligand>
        <name>(2R)-2-phosphoglycerate</name>
        <dbReference type="ChEBI" id="CHEBI:58289"/>
    </ligand>
</feature>